<protein>
    <recommendedName>
        <fullName>Topless-related protein 1</fullName>
    </recommendedName>
    <alternativeName>
        <fullName>Protein MODIFIER OF SNC1 10</fullName>
    </alternativeName>
</protein>
<feature type="chain" id="PRO_0000394732" description="Topless-related protein 1">
    <location>
        <begin position="1"/>
        <end position="1120"/>
    </location>
</feature>
<feature type="domain" description="LisH" evidence="3">
    <location>
        <begin position="4"/>
        <end position="36"/>
    </location>
</feature>
<feature type="domain" description="CTLH" evidence="2">
    <location>
        <begin position="34"/>
        <end position="92"/>
    </location>
</feature>
<feature type="repeat" description="WD 1">
    <location>
        <begin position="353"/>
        <end position="393"/>
    </location>
</feature>
<feature type="repeat" description="WD 2">
    <location>
        <begin position="415"/>
        <end position="454"/>
    </location>
</feature>
<feature type="repeat" description="WD 3">
    <location>
        <begin position="460"/>
        <end position="501"/>
    </location>
</feature>
<feature type="repeat" description="WD 4">
    <location>
        <begin position="504"/>
        <end position="545"/>
    </location>
</feature>
<feature type="repeat" description="WD 5">
    <location>
        <begin position="548"/>
        <end position="591"/>
    </location>
</feature>
<feature type="repeat" description="WD 6">
    <location>
        <begin position="595"/>
        <end position="634"/>
    </location>
</feature>
<feature type="repeat" description="WD 7">
    <location>
        <begin position="639"/>
        <end position="678"/>
    </location>
</feature>
<feature type="repeat" description="WD 8">
    <location>
        <begin position="699"/>
        <end position="745"/>
    </location>
</feature>
<feature type="repeat" description="WD 9">
    <location>
        <begin position="755"/>
        <end position="794"/>
    </location>
</feature>
<feature type="repeat" description="WD 10">
    <location>
        <begin position="822"/>
        <end position="860"/>
    </location>
</feature>
<feature type="repeat" description="WD 11">
    <location>
        <begin position="863"/>
        <end position="903"/>
    </location>
</feature>
<feature type="repeat" description="WD 12">
    <location>
        <begin position="906"/>
        <end position="945"/>
    </location>
</feature>
<feature type="repeat" description="WD 13">
    <location>
        <begin position="999"/>
        <end position="1038"/>
    </location>
</feature>
<feature type="repeat" description="WD 14">
    <location>
        <begin position="1052"/>
        <end position="1091"/>
    </location>
</feature>
<feature type="region of interest" description="Disordered" evidence="4">
    <location>
        <begin position="210"/>
        <end position="235"/>
    </location>
</feature>
<feature type="region of interest" description="Disordered" evidence="4">
    <location>
        <begin position="283"/>
        <end position="307"/>
    </location>
</feature>
<feature type="region of interest" description="Disordered" evidence="4">
    <location>
        <begin position="1087"/>
        <end position="1120"/>
    </location>
</feature>
<feature type="compositionally biased region" description="Polar residues" evidence="4">
    <location>
        <begin position="1099"/>
        <end position="1120"/>
    </location>
</feature>
<feature type="modified residue" description="Phosphoserine" evidence="13 14 15">
    <location>
        <position position="214"/>
    </location>
</feature>
<feature type="splice variant" id="VSP_039582" description="In isoform 1." evidence="11">
    <location>
        <position position="279"/>
    </location>
</feature>
<feature type="sequence conflict" description="In Ref. 3; BAE98958." evidence="12" ref="3">
    <original>V</original>
    <variation>M</variation>
    <location>
        <position position="818"/>
    </location>
</feature>
<proteinExistence type="evidence at protein level"/>
<name>TPR1_ARATH</name>
<keyword id="KW-0025">Alternative splicing</keyword>
<keyword id="KW-0539">Nucleus</keyword>
<keyword id="KW-0597">Phosphoprotein</keyword>
<keyword id="KW-1185">Reference proteome</keyword>
<keyword id="KW-0677">Repeat</keyword>
<keyword id="KW-0678">Repressor</keyword>
<keyword id="KW-0804">Transcription</keyword>
<keyword id="KW-0805">Transcription regulation</keyword>
<keyword id="KW-0853">WD repeat</keyword>
<accession>Q0WV90</accession>
<accession>A8MR25</accession>
<accession>Q9M8L7</accession>
<gene>
    <name type="primary">TPR1</name>
    <name type="synonym">MOS10</name>
    <name type="ordered locus">At1g80490</name>
    <name type="ORF">F7H12</name>
    <name type="ORF">T21F11.18</name>
</gene>
<dbReference type="EMBL" id="AC018849">
    <property type="protein sequence ID" value="AAF27128.1"/>
    <property type="status" value="ALT_SEQ"/>
    <property type="molecule type" value="Genomic_DNA"/>
</dbReference>
<dbReference type="EMBL" id="AC034256">
    <property type="status" value="NOT_ANNOTATED_CDS"/>
    <property type="molecule type" value="Genomic_DNA"/>
</dbReference>
<dbReference type="EMBL" id="CP002684">
    <property type="protein sequence ID" value="AEE36411.1"/>
    <property type="molecule type" value="Genomic_DNA"/>
</dbReference>
<dbReference type="EMBL" id="CP002684">
    <property type="protein sequence ID" value="AEE36412.1"/>
    <property type="molecule type" value="Genomic_DNA"/>
</dbReference>
<dbReference type="EMBL" id="CP002684">
    <property type="protein sequence ID" value="ANM60269.1"/>
    <property type="molecule type" value="Genomic_DNA"/>
</dbReference>
<dbReference type="EMBL" id="AK226879">
    <property type="protein sequence ID" value="BAE98958.1"/>
    <property type="molecule type" value="mRNA"/>
</dbReference>
<dbReference type="PIR" id="G96836">
    <property type="entry name" value="G96836"/>
</dbReference>
<dbReference type="RefSeq" id="NP_001319429.1">
    <molecule id="Q0WV90-2"/>
    <property type="nucleotide sequence ID" value="NM_001334989.1"/>
</dbReference>
<dbReference type="RefSeq" id="NP_178164.3">
    <molecule id="Q0WV90-1"/>
    <property type="nucleotide sequence ID" value="NM_106697.5"/>
</dbReference>
<dbReference type="RefSeq" id="NP_849913.2">
    <molecule id="Q0WV90-2"/>
    <property type="nucleotide sequence ID" value="NM_179582.2"/>
</dbReference>
<dbReference type="BioGRID" id="29606">
    <property type="interactions" value="55"/>
</dbReference>
<dbReference type="DIP" id="DIP-59361N"/>
<dbReference type="FunCoup" id="Q0WV90">
    <property type="interactions" value="1495"/>
</dbReference>
<dbReference type="IntAct" id="Q0WV90">
    <property type="interactions" value="3"/>
</dbReference>
<dbReference type="STRING" id="3702.Q0WV90"/>
<dbReference type="GlyGen" id="Q0WV90">
    <property type="glycosylation" value="2 sites"/>
</dbReference>
<dbReference type="iPTMnet" id="Q0WV90"/>
<dbReference type="PaxDb" id="3702-AT1G80490.2"/>
<dbReference type="ProteomicsDB" id="234100">
    <molecule id="Q0WV90-2"/>
</dbReference>
<dbReference type="EnsemblPlants" id="AT1G80490.1">
    <molecule id="Q0WV90-1"/>
    <property type="protein sequence ID" value="AT1G80490.1"/>
    <property type="gene ID" value="AT1G80490"/>
</dbReference>
<dbReference type="EnsemblPlants" id="AT1G80490.2">
    <molecule id="Q0WV90-2"/>
    <property type="protein sequence ID" value="AT1G80490.2"/>
    <property type="gene ID" value="AT1G80490"/>
</dbReference>
<dbReference type="EnsemblPlants" id="AT1G80490.3">
    <molecule id="Q0WV90-2"/>
    <property type="protein sequence ID" value="AT1G80490.3"/>
    <property type="gene ID" value="AT1G80490"/>
</dbReference>
<dbReference type="GeneID" id="844388"/>
<dbReference type="Gramene" id="AT1G80490.1">
    <molecule id="Q0WV90-1"/>
    <property type="protein sequence ID" value="AT1G80490.1"/>
    <property type="gene ID" value="AT1G80490"/>
</dbReference>
<dbReference type="Gramene" id="AT1G80490.2">
    <molecule id="Q0WV90-2"/>
    <property type="protein sequence ID" value="AT1G80490.2"/>
    <property type="gene ID" value="AT1G80490"/>
</dbReference>
<dbReference type="Gramene" id="AT1G80490.3">
    <molecule id="Q0WV90-2"/>
    <property type="protein sequence ID" value="AT1G80490.3"/>
    <property type="gene ID" value="AT1G80490"/>
</dbReference>
<dbReference type="KEGG" id="ath:AT1G80490"/>
<dbReference type="Araport" id="AT1G80490"/>
<dbReference type="TAIR" id="AT1G80490">
    <property type="gene designation" value="TPR1"/>
</dbReference>
<dbReference type="eggNOG" id="KOG0266">
    <property type="taxonomic scope" value="Eukaryota"/>
</dbReference>
<dbReference type="InParanoid" id="Q0WV90"/>
<dbReference type="OMA" id="WFPRESA"/>
<dbReference type="OrthoDB" id="6262491at2759"/>
<dbReference type="PhylomeDB" id="Q0WV90"/>
<dbReference type="PRO" id="PR:Q0WV90"/>
<dbReference type="Proteomes" id="UP000006548">
    <property type="component" value="Chromosome 1"/>
</dbReference>
<dbReference type="ExpressionAtlas" id="Q0WV90">
    <property type="expression patterns" value="baseline and differential"/>
</dbReference>
<dbReference type="GO" id="GO:0005634">
    <property type="term" value="C:nucleus"/>
    <property type="evidence" value="ECO:0007669"/>
    <property type="project" value="UniProtKB-SubCell"/>
</dbReference>
<dbReference type="GO" id="GO:0010072">
    <property type="term" value="P:primary shoot apical meristem specification"/>
    <property type="evidence" value="ECO:0000316"/>
    <property type="project" value="TAIR"/>
</dbReference>
<dbReference type="GO" id="GO:0006355">
    <property type="term" value="P:regulation of DNA-templated transcription"/>
    <property type="evidence" value="ECO:0007669"/>
    <property type="project" value="InterPro"/>
</dbReference>
<dbReference type="CDD" id="cd00200">
    <property type="entry name" value="WD40"/>
    <property type="match status" value="1"/>
</dbReference>
<dbReference type="FunFam" id="2.130.10.10:FF:000558">
    <property type="entry name" value="Topless-related protein 1"/>
    <property type="match status" value="1"/>
</dbReference>
<dbReference type="FunFam" id="2.130.10.10:FF:001237">
    <property type="entry name" value="Topless-related protein 2"/>
    <property type="match status" value="1"/>
</dbReference>
<dbReference type="FunFam" id="2.130.10.10:FF:000479">
    <property type="entry name" value="Topless-related protein 3"/>
    <property type="match status" value="1"/>
</dbReference>
<dbReference type="Gene3D" id="2.130.10.10">
    <property type="entry name" value="YVTN repeat-like/Quinoprotein amine dehydrogenase"/>
    <property type="match status" value="4"/>
</dbReference>
<dbReference type="InterPro" id="IPR006595">
    <property type="entry name" value="CTLH_C"/>
</dbReference>
<dbReference type="InterPro" id="IPR006594">
    <property type="entry name" value="LisH"/>
</dbReference>
<dbReference type="InterPro" id="IPR011047">
    <property type="entry name" value="Quinoprotein_ADH-like_sf"/>
</dbReference>
<dbReference type="InterPro" id="IPR027728">
    <property type="entry name" value="Topless_fam"/>
</dbReference>
<dbReference type="InterPro" id="IPR048419">
    <property type="entry name" value="Topless_Znf"/>
</dbReference>
<dbReference type="InterPro" id="IPR054532">
    <property type="entry name" value="TPL_SMU1_LisH-like"/>
</dbReference>
<dbReference type="InterPro" id="IPR054080">
    <property type="entry name" value="TPR1-like_2nd"/>
</dbReference>
<dbReference type="InterPro" id="IPR015943">
    <property type="entry name" value="WD40/YVTN_repeat-like_dom_sf"/>
</dbReference>
<dbReference type="InterPro" id="IPR019775">
    <property type="entry name" value="WD40_repeat_CS"/>
</dbReference>
<dbReference type="InterPro" id="IPR036322">
    <property type="entry name" value="WD40_repeat_dom_sf"/>
</dbReference>
<dbReference type="InterPro" id="IPR001680">
    <property type="entry name" value="WD40_rpt"/>
</dbReference>
<dbReference type="PANTHER" id="PTHR44083:SF45">
    <property type="entry name" value="TOPLESS-RELATED PROTEIN 1"/>
    <property type="match status" value="1"/>
</dbReference>
<dbReference type="PANTHER" id="PTHR44083">
    <property type="entry name" value="TOPLESS-RELATED PROTEIN 1-RELATED"/>
    <property type="match status" value="1"/>
</dbReference>
<dbReference type="Pfam" id="PF17814">
    <property type="entry name" value="LisH_TPL"/>
    <property type="match status" value="1"/>
</dbReference>
<dbReference type="Pfam" id="PF21889">
    <property type="entry name" value="TPR1-like_2nd"/>
    <property type="match status" value="1"/>
</dbReference>
<dbReference type="Pfam" id="PF00400">
    <property type="entry name" value="WD40"/>
    <property type="match status" value="3"/>
</dbReference>
<dbReference type="Pfam" id="PF21359">
    <property type="entry name" value="zf_topless"/>
    <property type="match status" value="1"/>
</dbReference>
<dbReference type="SMART" id="SM00668">
    <property type="entry name" value="CTLH"/>
    <property type="match status" value="1"/>
</dbReference>
<dbReference type="SMART" id="SM00667">
    <property type="entry name" value="LisH"/>
    <property type="match status" value="1"/>
</dbReference>
<dbReference type="SMART" id="SM00320">
    <property type="entry name" value="WD40"/>
    <property type="match status" value="12"/>
</dbReference>
<dbReference type="SUPFAM" id="SSF50998">
    <property type="entry name" value="Quinoprotein alcohol dehydrogenase-like"/>
    <property type="match status" value="1"/>
</dbReference>
<dbReference type="SUPFAM" id="SSF50978">
    <property type="entry name" value="WD40 repeat-like"/>
    <property type="match status" value="1"/>
</dbReference>
<dbReference type="PROSITE" id="PS50897">
    <property type="entry name" value="CTLH"/>
    <property type="match status" value="1"/>
</dbReference>
<dbReference type="PROSITE" id="PS50896">
    <property type="entry name" value="LISH"/>
    <property type="match status" value="1"/>
</dbReference>
<dbReference type="PROSITE" id="PS00678">
    <property type="entry name" value="WD_REPEATS_1"/>
    <property type="match status" value="2"/>
</dbReference>
<dbReference type="PROSITE" id="PS50082">
    <property type="entry name" value="WD_REPEATS_2"/>
    <property type="match status" value="3"/>
</dbReference>
<dbReference type="PROSITE" id="PS50294">
    <property type="entry name" value="WD_REPEATS_REGION"/>
    <property type="match status" value="2"/>
</dbReference>
<evidence type="ECO:0000250" key="1"/>
<evidence type="ECO:0000255" key="2">
    <source>
        <dbReference type="PROSITE-ProRule" id="PRU00058"/>
    </source>
</evidence>
<evidence type="ECO:0000255" key="3">
    <source>
        <dbReference type="PROSITE-ProRule" id="PRU00126"/>
    </source>
</evidence>
<evidence type="ECO:0000256" key="4">
    <source>
        <dbReference type="SAM" id="MobiDB-lite"/>
    </source>
</evidence>
<evidence type="ECO:0000269" key="5">
    <source>
    </source>
</evidence>
<evidence type="ECO:0000269" key="6">
    <source>
    </source>
</evidence>
<evidence type="ECO:0000269" key="7">
    <source>
    </source>
</evidence>
<evidence type="ECO:0000269" key="8">
    <source>
    </source>
</evidence>
<evidence type="ECO:0000269" key="9">
    <source>
    </source>
</evidence>
<evidence type="ECO:0000269" key="10">
    <source>
    </source>
</evidence>
<evidence type="ECO:0000303" key="11">
    <source ref="3"/>
</evidence>
<evidence type="ECO:0000305" key="12"/>
<evidence type="ECO:0007744" key="13">
    <source>
    </source>
</evidence>
<evidence type="ECO:0007744" key="14">
    <source>
    </source>
</evidence>
<evidence type="ECO:0007744" key="15">
    <source>
    </source>
</evidence>
<comment type="function">
    <text evidence="1 5">Transcriptional corepressor. Activates TIR-NB-LRR R protein-mediated immune responses through repression of negative regulators such as CNGC2/DND1 (PubMed:20647385). Negative regulator of jasmonate responses (By similarity).</text>
</comment>
<comment type="subunit">
    <text evidence="5 6 7 8 9 10">Tetramer (PubMed:26601214). Interacts with SNC1 (via TIR domain) and HDA19 (PubMed:20647385). Interacts with SPL (via EAR motif) (PubMed:25378179, PubMed:25527103). Interacts with SPEAR3/TIE1 (PubMed:23444332). Binds to and corepresses GAF1/IDD2 (PubMed:25035403).</text>
</comment>
<comment type="interaction">
    <interactant intactId="EBI-15866619">
        <id>Q0WV90</id>
    </interactant>
    <interactant intactId="EBI-15866586">
        <id>O23530</id>
        <label>SNC1</label>
    </interactant>
    <organismsDiffer>false</organismsDiffer>
    <experiments>2</experiments>
</comment>
<comment type="subcellular location">
    <subcellularLocation>
        <location evidence="5">Nucleus</location>
    </subcellularLocation>
</comment>
<comment type="alternative products">
    <event type="alternative splicing"/>
    <isoform>
        <id>Q0WV90-2</id>
        <name>2</name>
        <sequence type="displayed"/>
    </isoform>
    <isoform>
        <id>Q0WV90-1</id>
        <name>1</name>
        <sequence type="described" ref="VSP_039582"/>
    </isoform>
</comment>
<comment type="tissue specificity">
    <text evidence="9">Highly expressed in stamen primordium, microsporocyte, ovule primordium and megasporocyte during sporogenesis.</text>
</comment>
<comment type="domain">
    <text evidence="10">The N-terminal TOPLESS domain (TPD) (1-209) binds directly to a 12-amino acid LxLxL EAR motif peptide.</text>
</comment>
<comment type="disruption phenotype">
    <text evidence="5">Partially suppresses the constitutive disease resistance phenotype of the snc1 mutant.</text>
</comment>
<comment type="miscellaneous">
    <text>Overexpression of TPR1 leads to constitutive activation of defense responses.</text>
</comment>
<comment type="sequence caution" evidence="12">
    <conflict type="erroneous gene model prediction">
        <sequence resource="EMBL-CDS" id="AAF27128"/>
    </conflict>
</comment>
<sequence length="1120" mass="124089">MSSLSRELVFLILQFLDEEKFKETVHKLEQESGFFFNMKYFEDEVHNGNWDEVEKYLSGFTKVDDNRYSMKIFFEIRKQKYLEALDRHDRPKAVDILVKDLKVFSTFNEELFKEITQLLTLENFRENEQLSKYGDTKSARAIMLVELKKLIEANPLFRDKLQFPTLRTSRLRTLINQSLNWQHQLCKNPRPNPDIKTLFVDHSCRLPNDARAPSPVNNPLLGSLPKAEGFPPLGAHGPFQPTPSPVPTPLAGWMSSPSSVPHPAVSGGPIALGAPSIQAALKHPRTPPSNSAVDYPSGDSDHVSKRTRPMGISDEVSLGVNMLPMTFPGQAHGHNQTFKAPDDLPKTVARTLSQGSSPMSMDFHPIKQTLLLVGTNVGDIGLWEVGSRERLVQKTFKVWDLSKCSMPLQAALVKEPVVSVNRVIWSPDGSLFGVAYSRHIVQLYSYHGGEDMRQHLEIDAHVGGVNDIAFSTPNKQLCVTTCGDDKTIKVWDAATGVKRYTFEGHEAPVYSICPHYKENIQFIFSTALDGKIKAWLYDNMGSRVDYEAPGRWCTTMAYSADGTRLFSCGTSKDGESFIVEWNESEGAVKRTYQGFHKRSLGVVQFDTTKNRYLAAGDDFSIKFWDMDTIQLLTAIDADGGLQASPRIRFNKEGSLLAVSANDNMIKVMANSDGLRLLHTVENLSSESSKPAINSIPMVERPASVVSIPGMNGDSRNMVDVKPVITEESNDKSKVWKLTEVGEPSQCRSLRLPENMRVTKISRLIFTNSGNAILALASNAIHLLWKWQRNDRNATGKATASLPPQQWQPASGILMTNDVAETNPEEAVPCFALSKNDSYVMSASGGKISLFNMMTFKTMATFMPPPPAATFLAFHPQDNNIIAIGMDDSTIQIYNVRVDEVKSKLKGHSKRITGLAFSNVLNVLVSSGADAQLCVWNTDGWEKQKSKVLQIPQGRSTSSLSDTRVQFHQDQVHFLVVHETQLAIYETTKLECMKQWPVRESAAPITHATFSCDSQLIYTSFMDATICVFSSANLRLRCRVNPSAYLPASLSNSNVHPLVIAAHPQESNMFAVGLSDGGVHIFEPLESEGKWGVAPPPENGSASAVTATPSVGASASDQPQR</sequence>
<reference key="1">
    <citation type="journal article" date="2000" name="Nature">
        <title>Sequence and analysis of chromosome 1 of the plant Arabidopsis thaliana.</title>
        <authorList>
            <person name="Theologis A."/>
            <person name="Ecker J.R."/>
            <person name="Palm C.J."/>
            <person name="Federspiel N.A."/>
            <person name="Kaul S."/>
            <person name="White O."/>
            <person name="Alonso J."/>
            <person name="Altafi H."/>
            <person name="Araujo R."/>
            <person name="Bowman C.L."/>
            <person name="Brooks S.Y."/>
            <person name="Buehler E."/>
            <person name="Chan A."/>
            <person name="Chao Q."/>
            <person name="Chen H."/>
            <person name="Cheuk R.F."/>
            <person name="Chin C.W."/>
            <person name="Chung M.K."/>
            <person name="Conn L."/>
            <person name="Conway A.B."/>
            <person name="Conway A.R."/>
            <person name="Creasy T.H."/>
            <person name="Dewar K."/>
            <person name="Dunn P."/>
            <person name="Etgu P."/>
            <person name="Feldblyum T.V."/>
            <person name="Feng J.-D."/>
            <person name="Fong B."/>
            <person name="Fujii C.Y."/>
            <person name="Gill J.E."/>
            <person name="Goldsmith A.D."/>
            <person name="Haas B."/>
            <person name="Hansen N.F."/>
            <person name="Hughes B."/>
            <person name="Huizar L."/>
            <person name="Hunter J.L."/>
            <person name="Jenkins J."/>
            <person name="Johnson-Hopson C."/>
            <person name="Khan S."/>
            <person name="Khaykin E."/>
            <person name="Kim C.J."/>
            <person name="Koo H.L."/>
            <person name="Kremenetskaia I."/>
            <person name="Kurtz D.B."/>
            <person name="Kwan A."/>
            <person name="Lam B."/>
            <person name="Langin-Hooper S."/>
            <person name="Lee A."/>
            <person name="Lee J.M."/>
            <person name="Lenz C.A."/>
            <person name="Li J.H."/>
            <person name="Li Y.-P."/>
            <person name="Lin X."/>
            <person name="Liu S.X."/>
            <person name="Liu Z.A."/>
            <person name="Luros J.S."/>
            <person name="Maiti R."/>
            <person name="Marziali A."/>
            <person name="Militscher J."/>
            <person name="Miranda M."/>
            <person name="Nguyen M."/>
            <person name="Nierman W.C."/>
            <person name="Osborne B.I."/>
            <person name="Pai G."/>
            <person name="Peterson J."/>
            <person name="Pham P.K."/>
            <person name="Rizzo M."/>
            <person name="Rooney T."/>
            <person name="Rowley D."/>
            <person name="Sakano H."/>
            <person name="Salzberg S.L."/>
            <person name="Schwartz J.R."/>
            <person name="Shinn P."/>
            <person name="Southwick A.M."/>
            <person name="Sun H."/>
            <person name="Tallon L.J."/>
            <person name="Tambunga G."/>
            <person name="Toriumi M.J."/>
            <person name="Town C.D."/>
            <person name="Utterback T."/>
            <person name="Van Aken S."/>
            <person name="Vaysberg M."/>
            <person name="Vysotskaia V.S."/>
            <person name="Walker M."/>
            <person name="Wu D."/>
            <person name="Yu G."/>
            <person name="Fraser C.M."/>
            <person name="Venter J.C."/>
            <person name="Davis R.W."/>
        </authorList>
    </citation>
    <scope>NUCLEOTIDE SEQUENCE [LARGE SCALE GENOMIC DNA]</scope>
    <source>
        <strain>cv. Columbia</strain>
    </source>
</reference>
<reference key="2">
    <citation type="journal article" date="2017" name="Plant J.">
        <title>Araport11: a complete reannotation of the Arabidopsis thaliana reference genome.</title>
        <authorList>
            <person name="Cheng C.Y."/>
            <person name="Krishnakumar V."/>
            <person name="Chan A.P."/>
            <person name="Thibaud-Nissen F."/>
            <person name="Schobel S."/>
            <person name="Town C.D."/>
        </authorList>
    </citation>
    <scope>GENOME REANNOTATION</scope>
    <source>
        <strain>cv. Columbia</strain>
    </source>
</reference>
<reference key="3">
    <citation type="submission" date="2006-07" db="EMBL/GenBank/DDBJ databases">
        <title>Large-scale analysis of RIKEN Arabidopsis full-length (RAFL) cDNAs.</title>
        <authorList>
            <person name="Totoki Y."/>
            <person name="Seki M."/>
            <person name="Ishida J."/>
            <person name="Nakajima M."/>
            <person name="Enju A."/>
            <person name="Kamiya A."/>
            <person name="Narusaka M."/>
            <person name="Shin-i T."/>
            <person name="Nakagawa M."/>
            <person name="Sakamoto N."/>
            <person name="Oishi K."/>
            <person name="Kohara Y."/>
            <person name="Kobayashi M."/>
            <person name="Toyoda A."/>
            <person name="Sakaki Y."/>
            <person name="Sakurai T."/>
            <person name="Iida K."/>
            <person name="Akiyama K."/>
            <person name="Satou M."/>
            <person name="Toyoda T."/>
            <person name="Konagaya A."/>
            <person name="Carninci P."/>
            <person name="Kawai J."/>
            <person name="Hayashizaki Y."/>
            <person name="Shinozaki K."/>
        </authorList>
    </citation>
    <scope>NUCLEOTIDE SEQUENCE [LARGE SCALE MRNA] (ISOFORM 1)</scope>
    <source>
        <strain>cv. Columbia</strain>
    </source>
</reference>
<reference key="4">
    <citation type="journal article" date="2006" name="Science">
        <title>TOPLESS regulates apical embryonic fate in Arabidopsis.</title>
        <authorList>
            <person name="Long J.A."/>
            <person name="Ohno C."/>
            <person name="Smith Z.R."/>
            <person name="Meyerowitz E.M."/>
        </authorList>
    </citation>
    <scope>GENE FAMILY</scope>
    <scope>NOMENCLATURE</scope>
</reference>
<reference key="5">
    <citation type="journal article" date="2008" name="J. Proteome Res.">
        <title>Site-specific phosphorylation profiling of Arabidopsis proteins by mass spectrometry and peptide chip analysis.</title>
        <authorList>
            <person name="de la Fuente van Bentem S."/>
            <person name="Anrather D."/>
            <person name="Dohnal I."/>
            <person name="Roitinger E."/>
            <person name="Csaszar E."/>
            <person name="Joore J."/>
            <person name="Buijnink J."/>
            <person name="Carreri A."/>
            <person name="Forzani C."/>
            <person name="Lorkovic Z.J."/>
            <person name="Barta A."/>
            <person name="Lecourieux D."/>
            <person name="Verhounig A."/>
            <person name="Jonak C."/>
            <person name="Hirt H."/>
        </authorList>
    </citation>
    <scope>PHOSPHORYLATION [LARGE SCALE ANALYSIS] AT SER-214</scope>
    <scope>IDENTIFICATION BY MASS SPECTROMETRY [LARGE SCALE ANALYSIS]</scope>
    <source>
        <tissue>Root</tissue>
    </source>
</reference>
<reference key="6">
    <citation type="journal article" date="2009" name="J. Proteomics">
        <title>Phosphoproteomic analysis of nuclei-enriched fractions from Arabidopsis thaliana.</title>
        <authorList>
            <person name="Jones A.M.E."/>
            <person name="MacLean D."/>
            <person name="Studholme D.J."/>
            <person name="Serna-Sanz A."/>
            <person name="Andreasson E."/>
            <person name="Rathjen J.P."/>
            <person name="Peck S.C."/>
        </authorList>
    </citation>
    <scope>PHOSPHORYLATION [LARGE SCALE ANALYSIS] AT SER-214</scope>
    <scope>IDENTIFICATION BY MASS SPECTROMETRY [LARGE SCALE ANALYSIS]</scope>
    <source>
        <strain>cv. Columbia</strain>
    </source>
</reference>
<reference key="7">
    <citation type="journal article" date="2009" name="Plant Physiol.">
        <title>Large-scale Arabidopsis phosphoproteome profiling reveals novel chloroplast kinase substrates and phosphorylation networks.</title>
        <authorList>
            <person name="Reiland S."/>
            <person name="Messerli G."/>
            <person name="Baerenfaller K."/>
            <person name="Gerrits B."/>
            <person name="Endler A."/>
            <person name="Grossmann J."/>
            <person name="Gruissem W."/>
            <person name="Baginsky S."/>
        </authorList>
    </citation>
    <scope>PHOSPHORYLATION [LARGE SCALE ANALYSIS] AT SER-214</scope>
    <scope>IDENTIFICATION BY MASS SPECTROMETRY [LARGE SCALE ANALYSIS]</scope>
</reference>
<reference key="8">
    <citation type="journal article" date="2010" name="Proc. Natl. Acad. Sci. U.S.A.">
        <title>Arabidopsis resistance protein SNC1 activates immune responses through association with a transcriptional corepressor.</title>
        <authorList>
            <person name="Zhu Z."/>
            <person name="Xu F."/>
            <person name="Zhang Y."/>
            <person name="Cheng Y.T."/>
            <person name="Wiermer M."/>
            <person name="Li X."/>
            <person name="Zhang Y."/>
        </authorList>
    </citation>
    <scope>FUNCTION</scope>
    <scope>SUBCELLULAR LOCATION</scope>
    <scope>INTERACTION WITH SNC1 AND HDA19</scope>
    <scope>DISRUPTION PHENOTYPE</scope>
</reference>
<reference key="9">
    <citation type="journal article" date="2013" name="Plant Cell">
        <title>The TIE1 transcriptional repressor links TCP transcription factors with TOPLESS/TOPLESS-RELATED corepressors and modulates leaf development in Arabidopsis.</title>
        <authorList>
            <person name="Tao Q."/>
            <person name="Guo D."/>
            <person name="Wei B."/>
            <person name="Zhang F."/>
            <person name="Pang C."/>
            <person name="Jiang H."/>
            <person name="Zhang J."/>
            <person name="Wei T."/>
            <person name="Gu H."/>
            <person name="Qu L.J."/>
            <person name="Qin G."/>
        </authorList>
    </citation>
    <scope>INTERACTION WITH SPEAR3/TIE1</scope>
</reference>
<reference key="10">
    <citation type="journal article" date="2014" name="J. Genet. Genomics">
        <title>SPOROCYTELESS is a novel embryophyte-specific transcription repressor that interacts with TPL and TCP proteins in Arabidopsis.</title>
        <authorList>
            <person name="Chen G.H."/>
            <person name="Sun J.Y."/>
            <person name="Liu M."/>
            <person name="Liu J."/>
            <person name="Yang W.C."/>
        </authorList>
    </citation>
    <scope>INTERACTION WITH SPL</scope>
    <scope>TISSUE SPECIFICITY</scope>
</reference>
<reference key="11">
    <citation type="journal article" date="2014" name="Plant Cell">
        <title>DELLAs function as coactivators of GAI-ASSOCIATED FACTOR1 in regulation of gibberellin homeostasis and signaling in Arabidopsis.</title>
        <authorList>
            <person name="Fukazawa J."/>
            <person name="Teramura H."/>
            <person name="Murakoshi S."/>
            <person name="Nasuno K."/>
            <person name="Nishida N."/>
            <person name="Ito T."/>
            <person name="Yoshida M."/>
            <person name="Kamiya Y."/>
            <person name="Yamaguchi S."/>
            <person name="Takahashi Y."/>
        </authorList>
    </citation>
    <scope>INTERACTION WITH GAF1/IDD2</scope>
    <source>
        <strain>cv. Columbia</strain>
    </source>
</reference>
<reference key="12">
    <citation type="journal article" date="2015" name="Cell Res.">
        <title>The molecular mechanism of sporocyteless/nozzle in controlling Arabidopsis ovule development.</title>
        <authorList>
            <person name="Wei B."/>
            <person name="Zhang J."/>
            <person name="Pang C."/>
            <person name="Yu H."/>
            <person name="Guo D."/>
            <person name="Jiang H."/>
            <person name="Ding M."/>
            <person name="Chen Z."/>
            <person name="Tao Q."/>
            <person name="Gu H."/>
            <person name="Qu L.J."/>
            <person name="Qin G."/>
        </authorList>
    </citation>
    <scope>INTERACTION WITH SPL</scope>
</reference>
<reference key="13">
    <citation type="journal article" date="2015" name="Sci. Adv.">
        <title>Structural basis for recognition of diverse transcriptional repressors by the TOPLESS family of corepressors.</title>
        <authorList>
            <person name="Ke J."/>
            <person name="Ma H."/>
            <person name="Gu X."/>
            <person name="Thelen A."/>
            <person name="Brunzelle J.S."/>
            <person name="Li J."/>
            <person name="Xu H.E."/>
            <person name="Melcher K."/>
        </authorList>
    </citation>
    <scope>SUBUNIT</scope>
    <scope>DOMAIN</scope>
</reference>
<organism>
    <name type="scientific">Arabidopsis thaliana</name>
    <name type="common">Mouse-ear cress</name>
    <dbReference type="NCBI Taxonomy" id="3702"/>
    <lineage>
        <taxon>Eukaryota</taxon>
        <taxon>Viridiplantae</taxon>
        <taxon>Streptophyta</taxon>
        <taxon>Embryophyta</taxon>
        <taxon>Tracheophyta</taxon>
        <taxon>Spermatophyta</taxon>
        <taxon>Magnoliopsida</taxon>
        <taxon>eudicotyledons</taxon>
        <taxon>Gunneridae</taxon>
        <taxon>Pentapetalae</taxon>
        <taxon>rosids</taxon>
        <taxon>malvids</taxon>
        <taxon>Brassicales</taxon>
        <taxon>Brassicaceae</taxon>
        <taxon>Camelineae</taxon>
        <taxon>Arabidopsis</taxon>
    </lineage>
</organism>